<protein>
    <recommendedName>
        <fullName evidence="6">Agglutinin-like protein ARB_02240</fullName>
    </recommendedName>
    <alternativeName>
        <fullName evidence="6">Adhesin ARB_02240</fullName>
    </alternativeName>
</protein>
<name>ALS1_ARTBC</name>
<dbReference type="EMBL" id="ABSU01000025">
    <property type="protein sequence ID" value="EFE31046.1"/>
    <property type="molecule type" value="Genomic_DNA"/>
</dbReference>
<dbReference type="RefSeq" id="XP_003011686.1">
    <property type="nucleotide sequence ID" value="XM_003011640.1"/>
</dbReference>
<dbReference type="GeneID" id="9523457"/>
<dbReference type="KEGG" id="abe:ARB_02240"/>
<dbReference type="eggNOG" id="ENOG502S2BG">
    <property type="taxonomic scope" value="Eukaryota"/>
</dbReference>
<dbReference type="HOGENOM" id="CLU_324440_0_0_1"/>
<dbReference type="OMA" id="QCNFEVG"/>
<dbReference type="OrthoDB" id="5414836at2759"/>
<dbReference type="Proteomes" id="UP000008866">
    <property type="component" value="Unassembled WGS sequence"/>
</dbReference>
<dbReference type="GO" id="GO:0005576">
    <property type="term" value="C:extracellular region"/>
    <property type="evidence" value="ECO:0007669"/>
    <property type="project" value="UniProtKB-SubCell"/>
</dbReference>
<dbReference type="GO" id="GO:0005886">
    <property type="term" value="C:plasma membrane"/>
    <property type="evidence" value="ECO:0007669"/>
    <property type="project" value="UniProtKB-SubCell"/>
</dbReference>
<dbReference type="GO" id="GO:0098552">
    <property type="term" value="C:side of membrane"/>
    <property type="evidence" value="ECO:0007669"/>
    <property type="project" value="UniProtKB-KW"/>
</dbReference>
<dbReference type="GO" id="GO:0007155">
    <property type="term" value="P:cell adhesion"/>
    <property type="evidence" value="ECO:0007669"/>
    <property type="project" value="UniProtKB-KW"/>
</dbReference>
<dbReference type="PANTHER" id="PTHR38122">
    <property type="entry name" value="GLYCOPROTEIN X"/>
    <property type="match status" value="1"/>
</dbReference>
<dbReference type="PANTHER" id="PTHR38122:SF1">
    <property type="entry name" value="GLYCOPROTEIN X"/>
    <property type="match status" value="1"/>
</dbReference>
<sequence length="890" mass="93181">MRLTTSVLLWAATSVLQADATQTYRSPTGPEAYGAYPPRYTVSYTTITSTSTIHSCPPRTTTIFTSSPPPDDGCKFPGCPNQPPKPGSDVHCDIYCWAKGCSLCKNDTCPEQGGIYKRREDMKNIFGRSTGSAEGYNYTPETTCCCCCEPGGGKHTVTVTKTKTETKTETASITKIITDYVTKTVLIPTTVLEPTTIIDPTTVPTTVPTTIPTTVYNETTIHDSTTVSTTVIQPTTISDTTTLTTTFTTVVPTYITTTTFGTVTSVVTVMVPTTITSTYVSTMYTTLPGTTLTTSVTVPGPTVTPPPVTLPPETKIITLPASTVTKVTTLPASTMTVTSTLPASTITQSGTTVTLPGSTTVITSTIPASTITQTYTEPGTVSTVTSTPPPETHVITLPGSTITKVTTLPGTIMTVTQTLPASTVTQSGTTVTIPASTTVITTTLPASTITQTLTEPGKEITVTKTNTVTTTTTSFSISLCPTRTANPTYTPLAPLPSNYIWGCPPGQLCRPKRTPADGQCNFEVGLPSQNFVCSPDECIPSPPRHPPQKWTPGKVEKWVVSPGYFNIDPRKFGLTFDIFSFENVTATSQGYFRRSLSALFKRGPEIVAGECYDECDSAATEAEAVGADPTLCKPDSLFMKLVGQCKKCTNDRSNGTYSDFDTVLFPEFQKWLDYCDTLPIPSGPTTRPEPGMTSSTTSSPTHSTVITSMTSMTTSESSTSMRSSSTATTSETSSTESSRTSSESSTESSTDSSTTERTRTTSTAESTETTEPTSTDASTESTSTATHSSTGSDPESTNTRHPSSTASGSTTTRGGGGGHGSSSSEGPVPTSMGTATTTGGGSIPGSGTGIPPSSSTDPVPFPGGAGSLSPSTWGKVVTCISSMALLVAFI</sequence>
<proteinExistence type="evidence at protein level"/>
<comment type="function">
    <text evidence="1">Cell surface adhesion protein which mediates cell agglutination and host tissue adherence (By similarity).</text>
</comment>
<comment type="subcellular location">
    <subcellularLocation>
        <location evidence="5">Secreted</location>
    </subcellularLocation>
    <subcellularLocation>
        <location evidence="1">Cell membrane</location>
        <topology evidence="1">Lipid-anchor</topology>
        <topology evidence="1">GPI-anchor</topology>
    </subcellularLocation>
    <subcellularLocation>
        <location evidence="1">Secreted</location>
        <location evidence="1">Cell wall</location>
    </subcellularLocation>
</comment>
<comment type="PTM">
    <text evidence="6">The GPI-anchor is attached to the protein in the endoplasmic reticulum and serves to target the protein to the cell surface. There, the glucosamine-inositol phospholipid moiety is cleaved off and the GPI-modified mannoprotein is covalently attached via its lipidless GPI glycan remnant to the 1,6-beta-glucan of the outer cell wall layer.</text>
</comment>
<comment type="similarity">
    <text evidence="6">Belongs to the ALS family.</text>
</comment>
<gene>
    <name type="ORF">ARB_02240</name>
</gene>
<keyword id="KW-0130">Cell adhesion</keyword>
<keyword id="KW-1003">Cell membrane</keyword>
<keyword id="KW-0134">Cell wall</keyword>
<keyword id="KW-0325">Glycoprotein</keyword>
<keyword id="KW-0336">GPI-anchor</keyword>
<keyword id="KW-0449">Lipoprotein</keyword>
<keyword id="KW-0472">Membrane</keyword>
<keyword id="KW-1185">Reference proteome</keyword>
<keyword id="KW-0964">Secreted</keyword>
<keyword id="KW-0732">Signal</keyword>
<organism>
    <name type="scientific">Arthroderma benhamiae (strain ATCC MYA-4681 / CBS 112371)</name>
    <name type="common">Trichophyton mentagrophytes</name>
    <dbReference type="NCBI Taxonomy" id="663331"/>
    <lineage>
        <taxon>Eukaryota</taxon>
        <taxon>Fungi</taxon>
        <taxon>Dikarya</taxon>
        <taxon>Ascomycota</taxon>
        <taxon>Pezizomycotina</taxon>
        <taxon>Eurotiomycetes</taxon>
        <taxon>Eurotiomycetidae</taxon>
        <taxon>Onygenales</taxon>
        <taxon>Arthrodermataceae</taxon>
        <taxon>Trichophyton</taxon>
    </lineage>
</organism>
<evidence type="ECO:0000250" key="1">
    <source>
        <dbReference type="UniProtKB" id="Q5A8T4"/>
    </source>
</evidence>
<evidence type="ECO:0000255" key="2"/>
<evidence type="ECO:0000255" key="3">
    <source>
        <dbReference type="PROSITE-ProRule" id="PRU00498"/>
    </source>
</evidence>
<evidence type="ECO:0000256" key="4">
    <source>
        <dbReference type="SAM" id="MobiDB-lite"/>
    </source>
</evidence>
<evidence type="ECO:0000269" key="5">
    <source>
    </source>
</evidence>
<evidence type="ECO:0000305" key="6"/>
<feature type="signal peptide" evidence="2">
    <location>
        <begin position="1"/>
        <end position="20"/>
    </location>
</feature>
<feature type="chain" id="PRO_0000434673" description="Agglutinin-like protein ARB_02240" evidence="2">
    <location>
        <begin position="21"/>
        <end position="864"/>
    </location>
</feature>
<feature type="propeptide" id="PRO_0000434674" description="Removed in mature form" evidence="2">
    <location>
        <begin position="865"/>
        <end position="890"/>
    </location>
</feature>
<feature type="region of interest" description="Disordered" evidence="4">
    <location>
        <begin position="680"/>
        <end position="872"/>
    </location>
</feature>
<feature type="compositionally biased region" description="Low complexity" evidence="4">
    <location>
        <begin position="693"/>
        <end position="753"/>
    </location>
</feature>
<feature type="compositionally biased region" description="Low complexity" evidence="4">
    <location>
        <begin position="760"/>
        <end position="790"/>
    </location>
</feature>
<feature type="compositionally biased region" description="Polar residues" evidence="4">
    <location>
        <begin position="791"/>
        <end position="802"/>
    </location>
</feature>
<feature type="compositionally biased region" description="Low complexity" evidence="4">
    <location>
        <begin position="803"/>
        <end position="812"/>
    </location>
</feature>
<feature type="compositionally biased region" description="Low complexity" evidence="4">
    <location>
        <begin position="821"/>
        <end position="837"/>
    </location>
</feature>
<feature type="compositionally biased region" description="Gly residues" evidence="4">
    <location>
        <begin position="838"/>
        <end position="848"/>
    </location>
</feature>
<feature type="lipid moiety-binding region" description="GPI-anchor amidated glycine" evidence="2">
    <location>
        <position position="864"/>
    </location>
</feature>
<feature type="glycosylation site" description="N-linked (GlcNAc...) asparagine" evidence="3">
    <location>
        <position position="106"/>
    </location>
</feature>
<feature type="glycosylation site" description="N-linked (GlcNAc...) asparagine" evidence="3">
    <location>
        <position position="217"/>
    </location>
</feature>
<feature type="glycosylation site" description="N-linked (GlcNAc...) asparagine" evidence="3">
    <location>
        <position position="583"/>
    </location>
</feature>
<feature type="glycosylation site" description="N-linked (GlcNAc...) asparagine" evidence="3">
    <location>
        <position position="654"/>
    </location>
</feature>
<reference key="1">
    <citation type="journal article" date="2011" name="Genome Biol.">
        <title>Comparative and functional genomics provide insights into the pathogenicity of dermatophytic fungi.</title>
        <authorList>
            <person name="Burmester A."/>
            <person name="Shelest E."/>
            <person name="Gloeckner G."/>
            <person name="Heddergott C."/>
            <person name="Schindler S."/>
            <person name="Staib P."/>
            <person name="Heidel A."/>
            <person name="Felder M."/>
            <person name="Petzold A."/>
            <person name="Szafranski K."/>
            <person name="Feuermann M."/>
            <person name="Pedruzzi I."/>
            <person name="Priebe S."/>
            <person name="Groth M."/>
            <person name="Winkler R."/>
            <person name="Li W."/>
            <person name="Kniemeyer O."/>
            <person name="Schroeckh V."/>
            <person name="Hertweck C."/>
            <person name="Hube B."/>
            <person name="White T.C."/>
            <person name="Platzer M."/>
            <person name="Guthke R."/>
            <person name="Heitman J."/>
            <person name="Woestemeyer J."/>
            <person name="Zipfel P.F."/>
            <person name="Monod M."/>
            <person name="Brakhage A.A."/>
        </authorList>
    </citation>
    <scope>NUCLEOTIDE SEQUENCE [LARGE SCALE GENOMIC DNA]</scope>
    <source>
        <strain>ATCC MYA-4681 / CBS 112371</strain>
    </source>
</reference>
<reference key="2">
    <citation type="journal article" date="2011" name="Proteomics">
        <title>Identification of novel secreted proteases during extracellular proteolysis by dermatophytes at acidic pH.</title>
        <authorList>
            <person name="Sriranganadane D."/>
            <person name="Waridel P."/>
            <person name="Salamin K."/>
            <person name="Feuermann M."/>
            <person name="Mignon B."/>
            <person name="Staib P."/>
            <person name="Neuhaus J.M."/>
            <person name="Quadroni M."/>
            <person name="Monod M."/>
        </authorList>
    </citation>
    <scope>IDENTIFICATION BY MASS SPECTROMETRY</scope>
    <scope>SUBCELLULAR LOCATION</scope>
</reference>
<accession>D4B1B1</accession>